<evidence type="ECO:0000255" key="1">
    <source>
        <dbReference type="HAMAP-Rule" id="MF_01333"/>
    </source>
</evidence>
<evidence type="ECO:0000305" key="2"/>
<reference key="1">
    <citation type="journal article" date="2005" name="PLoS Biol.">
        <title>Major structural differences and novel potential virulence mechanisms from the genomes of multiple Campylobacter species.</title>
        <authorList>
            <person name="Fouts D.E."/>
            <person name="Mongodin E.F."/>
            <person name="Mandrell R.E."/>
            <person name="Miller W.G."/>
            <person name="Rasko D.A."/>
            <person name="Ravel J."/>
            <person name="Brinkac L.M."/>
            <person name="DeBoy R.T."/>
            <person name="Parker C.T."/>
            <person name="Daugherty S.C."/>
            <person name="Dodson R.J."/>
            <person name="Durkin A.S."/>
            <person name="Madupu R."/>
            <person name="Sullivan S.A."/>
            <person name="Shetty J.U."/>
            <person name="Ayodeji M.A."/>
            <person name="Shvartsbeyn A."/>
            <person name="Schatz M.C."/>
            <person name="Badger J.H."/>
            <person name="Fraser C.M."/>
            <person name="Nelson K.E."/>
        </authorList>
    </citation>
    <scope>NUCLEOTIDE SEQUENCE [LARGE SCALE GENOMIC DNA]</scope>
    <source>
        <strain>RM1221</strain>
    </source>
</reference>
<keyword id="KW-0687">Ribonucleoprotein</keyword>
<keyword id="KW-0689">Ribosomal protein</keyword>
<keyword id="KW-0694">RNA-binding</keyword>
<keyword id="KW-0699">rRNA-binding</keyword>
<keyword id="KW-0820">tRNA-binding</keyword>
<comment type="function">
    <text evidence="1">This is one of the proteins that bind and probably mediate the attachment of the 5S RNA into the large ribosomal subunit, where it forms part of the central protuberance. In the 70S ribosome it contacts protein S13 of the 30S subunit (bridge B1b), connecting the 2 subunits; this bridge is implicated in subunit movement. Contacts the P site tRNA; the 5S rRNA and some of its associated proteins might help stabilize positioning of ribosome-bound tRNAs.</text>
</comment>
<comment type="subunit">
    <text evidence="1">Part of the 50S ribosomal subunit; part of the 5S rRNA/L5/L18/L25 subcomplex. Contacts the 5S rRNA and the P site tRNA. Forms a bridge to the 30S subunit in the 70S ribosome.</text>
</comment>
<comment type="similarity">
    <text evidence="1">Belongs to the universal ribosomal protein uL5 family.</text>
</comment>
<dbReference type="EMBL" id="CP000025">
    <property type="protein sequence ID" value="AAW36285.1"/>
    <property type="molecule type" value="Genomic_DNA"/>
</dbReference>
<dbReference type="RefSeq" id="WP_002851453.1">
    <property type="nucleotide sequence ID" value="NC_003912.7"/>
</dbReference>
<dbReference type="SMR" id="Q5HSA2"/>
<dbReference type="KEGG" id="cjr:CJE1863"/>
<dbReference type="HOGENOM" id="CLU_061015_2_1_7"/>
<dbReference type="GO" id="GO:1990904">
    <property type="term" value="C:ribonucleoprotein complex"/>
    <property type="evidence" value="ECO:0007669"/>
    <property type="project" value="UniProtKB-KW"/>
</dbReference>
<dbReference type="GO" id="GO:0005840">
    <property type="term" value="C:ribosome"/>
    <property type="evidence" value="ECO:0007669"/>
    <property type="project" value="UniProtKB-KW"/>
</dbReference>
<dbReference type="GO" id="GO:0019843">
    <property type="term" value="F:rRNA binding"/>
    <property type="evidence" value="ECO:0007669"/>
    <property type="project" value="UniProtKB-UniRule"/>
</dbReference>
<dbReference type="GO" id="GO:0003735">
    <property type="term" value="F:structural constituent of ribosome"/>
    <property type="evidence" value="ECO:0007669"/>
    <property type="project" value="InterPro"/>
</dbReference>
<dbReference type="GO" id="GO:0000049">
    <property type="term" value="F:tRNA binding"/>
    <property type="evidence" value="ECO:0007669"/>
    <property type="project" value="UniProtKB-UniRule"/>
</dbReference>
<dbReference type="GO" id="GO:0006412">
    <property type="term" value="P:translation"/>
    <property type="evidence" value="ECO:0007669"/>
    <property type="project" value="UniProtKB-UniRule"/>
</dbReference>
<dbReference type="FunFam" id="3.30.1440.10:FF:000001">
    <property type="entry name" value="50S ribosomal protein L5"/>
    <property type="match status" value="1"/>
</dbReference>
<dbReference type="Gene3D" id="3.30.1440.10">
    <property type="match status" value="1"/>
</dbReference>
<dbReference type="HAMAP" id="MF_01333_B">
    <property type="entry name" value="Ribosomal_uL5_B"/>
    <property type="match status" value="1"/>
</dbReference>
<dbReference type="InterPro" id="IPR002132">
    <property type="entry name" value="Ribosomal_uL5"/>
</dbReference>
<dbReference type="InterPro" id="IPR020930">
    <property type="entry name" value="Ribosomal_uL5_bac-type"/>
</dbReference>
<dbReference type="InterPro" id="IPR031309">
    <property type="entry name" value="Ribosomal_uL5_C"/>
</dbReference>
<dbReference type="InterPro" id="IPR020929">
    <property type="entry name" value="Ribosomal_uL5_CS"/>
</dbReference>
<dbReference type="InterPro" id="IPR022803">
    <property type="entry name" value="Ribosomal_uL5_dom_sf"/>
</dbReference>
<dbReference type="InterPro" id="IPR031310">
    <property type="entry name" value="Ribosomal_uL5_N"/>
</dbReference>
<dbReference type="NCBIfam" id="NF000585">
    <property type="entry name" value="PRK00010.1"/>
    <property type="match status" value="1"/>
</dbReference>
<dbReference type="PANTHER" id="PTHR11994">
    <property type="entry name" value="60S RIBOSOMAL PROTEIN L11-RELATED"/>
    <property type="match status" value="1"/>
</dbReference>
<dbReference type="Pfam" id="PF00281">
    <property type="entry name" value="Ribosomal_L5"/>
    <property type="match status" value="1"/>
</dbReference>
<dbReference type="Pfam" id="PF00673">
    <property type="entry name" value="Ribosomal_L5_C"/>
    <property type="match status" value="1"/>
</dbReference>
<dbReference type="PIRSF" id="PIRSF002161">
    <property type="entry name" value="Ribosomal_L5"/>
    <property type="match status" value="1"/>
</dbReference>
<dbReference type="SUPFAM" id="SSF55282">
    <property type="entry name" value="RL5-like"/>
    <property type="match status" value="1"/>
</dbReference>
<dbReference type="PROSITE" id="PS00358">
    <property type="entry name" value="RIBOSOMAL_L5"/>
    <property type="match status" value="1"/>
</dbReference>
<accession>Q5HSA2</accession>
<protein>
    <recommendedName>
        <fullName evidence="1">Large ribosomal subunit protein uL5</fullName>
    </recommendedName>
    <alternativeName>
        <fullName evidence="2">50S ribosomal protein L5</fullName>
    </alternativeName>
</protein>
<feature type="chain" id="PRO_0000242983" description="Large ribosomal subunit protein uL5">
    <location>
        <begin position="1"/>
        <end position="181"/>
    </location>
</feature>
<gene>
    <name evidence="1" type="primary">rplE</name>
    <name type="ordered locus">CJE1863</name>
</gene>
<sequence>MMRLKEKYNQSIKPALVKEFDIKNPMLIPVIEKVVISVGAGELAKDQKVLQNVADTISLIAGQKAVITKAKKSVAGFKVREGFPVGVMVTLRKENMYAFLDKLISIALPRVKDFRGLSRDGFDGRGNYNFGLDEQLMFPEVEYDKILRTHGMNISIVTTAQNDKQAQKLLELIGVPFTKGK</sequence>
<name>RL5_CAMJR</name>
<proteinExistence type="inferred from homology"/>
<organism>
    <name type="scientific">Campylobacter jejuni (strain RM1221)</name>
    <dbReference type="NCBI Taxonomy" id="195099"/>
    <lineage>
        <taxon>Bacteria</taxon>
        <taxon>Pseudomonadati</taxon>
        <taxon>Campylobacterota</taxon>
        <taxon>Epsilonproteobacteria</taxon>
        <taxon>Campylobacterales</taxon>
        <taxon>Campylobacteraceae</taxon>
        <taxon>Campylobacter</taxon>
    </lineage>
</organism>